<protein>
    <recommendedName>
        <fullName evidence="1">4-hydroxybenzoate octaprenyltransferase</fullName>
        <ecNumber evidence="1">2.5.1.39</ecNumber>
    </recommendedName>
    <alternativeName>
        <fullName evidence="1">4-HB polyprenyltransferase</fullName>
    </alternativeName>
</protein>
<keyword id="KW-0997">Cell inner membrane</keyword>
<keyword id="KW-1003">Cell membrane</keyword>
<keyword id="KW-0460">Magnesium</keyword>
<keyword id="KW-0472">Membrane</keyword>
<keyword id="KW-0808">Transferase</keyword>
<keyword id="KW-0812">Transmembrane</keyword>
<keyword id="KW-1133">Transmembrane helix</keyword>
<keyword id="KW-0831">Ubiquinone biosynthesis</keyword>
<reference key="1">
    <citation type="journal article" date="2009" name="Infect. Immun.">
        <title>Comparative genomics reveal extensive transposon-mediated genomic plasticity and diversity among potential effector proteins within the genus Coxiella.</title>
        <authorList>
            <person name="Beare P.A."/>
            <person name="Unsworth N."/>
            <person name="Andoh M."/>
            <person name="Voth D.E."/>
            <person name="Omsland A."/>
            <person name="Gilk S.D."/>
            <person name="Williams K.P."/>
            <person name="Sobral B.W."/>
            <person name="Kupko J.J. III"/>
            <person name="Porcella S.F."/>
            <person name="Samuel J.E."/>
            <person name="Heinzen R.A."/>
        </authorList>
    </citation>
    <scope>NUCLEOTIDE SEQUENCE [LARGE SCALE GENOMIC DNA]</scope>
    <source>
        <strain>CbuK_Q154</strain>
    </source>
</reference>
<evidence type="ECO:0000255" key="1">
    <source>
        <dbReference type="HAMAP-Rule" id="MF_01635"/>
    </source>
</evidence>
<proteinExistence type="inferred from homology"/>
<comment type="function">
    <text evidence="1">Catalyzes the prenylation of para-hydroxybenzoate (PHB) with an all-trans polyprenyl group. Mediates the second step in the final reaction sequence of ubiquinone-8 (UQ-8) biosynthesis, which is the condensation of the polyisoprenoid side chain with PHB, generating the first membrane-bound Q intermediate 3-octaprenyl-4-hydroxybenzoate.</text>
</comment>
<comment type="catalytic activity">
    <reaction evidence="1">
        <text>all-trans-octaprenyl diphosphate + 4-hydroxybenzoate = 4-hydroxy-3-(all-trans-octaprenyl)benzoate + diphosphate</text>
        <dbReference type="Rhea" id="RHEA:27782"/>
        <dbReference type="ChEBI" id="CHEBI:1617"/>
        <dbReference type="ChEBI" id="CHEBI:17879"/>
        <dbReference type="ChEBI" id="CHEBI:33019"/>
        <dbReference type="ChEBI" id="CHEBI:57711"/>
        <dbReference type="EC" id="2.5.1.39"/>
    </reaction>
</comment>
<comment type="cofactor">
    <cofactor evidence="1">
        <name>Mg(2+)</name>
        <dbReference type="ChEBI" id="CHEBI:18420"/>
    </cofactor>
</comment>
<comment type="pathway">
    <text evidence="1">Cofactor biosynthesis; ubiquinone biosynthesis.</text>
</comment>
<comment type="subcellular location">
    <subcellularLocation>
        <location evidence="1">Cell inner membrane</location>
        <topology evidence="1">Multi-pass membrane protein</topology>
    </subcellularLocation>
</comment>
<comment type="similarity">
    <text evidence="1">Belongs to the UbiA prenyltransferase family.</text>
</comment>
<organism>
    <name type="scientific">Coxiella burnetii (strain CbuK_Q154)</name>
    <name type="common">Coxiella burnetii (strain Q154)</name>
    <dbReference type="NCBI Taxonomy" id="434924"/>
    <lineage>
        <taxon>Bacteria</taxon>
        <taxon>Pseudomonadati</taxon>
        <taxon>Pseudomonadota</taxon>
        <taxon>Gammaproteobacteria</taxon>
        <taxon>Legionellales</taxon>
        <taxon>Coxiellaceae</taxon>
        <taxon>Coxiella</taxon>
    </lineage>
</organism>
<name>UBIA_COXB1</name>
<gene>
    <name evidence="1" type="primary">ubiA</name>
    <name type="ordered locus">CbuK_1999</name>
</gene>
<dbReference type="EC" id="2.5.1.39" evidence="1"/>
<dbReference type="EMBL" id="CP001020">
    <property type="protein sequence ID" value="ACJ21103.1"/>
    <property type="molecule type" value="Genomic_DNA"/>
</dbReference>
<dbReference type="RefSeq" id="WP_005769326.1">
    <property type="nucleotide sequence ID" value="NC_011528.1"/>
</dbReference>
<dbReference type="SMR" id="B6J612"/>
<dbReference type="KEGG" id="cbc:CbuK_1999"/>
<dbReference type="HOGENOM" id="CLU_034879_1_0_6"/>
<dbReference type="UniPathway" id="UPA00232"/>
<dbReference type="GO" id="GO:0005886">
    <property type="term" value="C:plasma membrane"/>
    <property type="evidence" value="ECO:0007669"/>
    <property type="project" value="UniProtKB-SubCell"/>
</dbReference>
<dbReference type="GO" id="GO:0008412">
    <property type="term" value="F:4-hydroxybenzoate polyprenyltransferase activity"/>
    <property type="evidence" value="ECO:0007669"/>
    <property type="project" value="UniProtKB-UniRule"/>
</dbReference>
<dbReference type="GO" id="GO:0006744">
    <property type="term" value="P:ubiquinone biosynthetic process"/>
    <property type="evidence" value="ECO:0007669"/>
    <property type="project" value="UniProtKB-UniRule"/>
</dbReference>
<dbReference type="CDD" id="cd13959">
    <property type="entry name" value="PT_UbiA_COQ2"/>
    <property type="match status" value="1"/>
</dbReference>
<dbReference type="FunFam" id="1.10.357.140:FF:000002">
    <property type="entry name" value="4-hydroxybenzoate octaprenyltransferase"/>
    <property type="match status" value="1"/>
</dbReference>
<dbReference type="FunFam" id="1.20.120.1780:FF:000001">
    <property type="entry name" value="4-hydroxybenzoate octaprenyltransferase"/>
    <property type="match status" value="1"/>
</dbReference>
<dbReference type="Gene3D" id="1.10.357.140">
    <property type="entry name" value="UbiA prenyltransferase"/>
    <property type="match status" value="1"/>
</dbReference>
<dbReference type="Gene3D" id="1.20.120.1780">
    <property type="entry name" value="UbiA prenyltransferase"/>
    <property type="match status" value="1"/>
</dbReference>
<dbReference type="HAMAP" id="MF_01635">
    <property type="entry name" value="UbiA"/>
    <property type="match status" value="1"/>
</dbReference>
<dbReference type="InterPro" id="IPR006370">
    <property type="entry name" value="HB_polyprenyltransferase-like"/>
</dbReference>
<dbReference type="InterPro" id="IPR039653">
    <property type="entry name" value="Prenyltransferase"/>
</dbReference>
<dbReference type="InterPro" id="IPR000537">
    <property type="entry name" value="UbiA_prenyltransferase"/>
</dbReference>
<dbReference type="InterPro" id="IPR030470">
    <property type="entry name" value="UbiA_prenylTrfase_CS"/>
</dbReference>
<dbReference type="InterPro" id="IPR044878">
    <property type="entry name" value="UbiA_sf"/>
</dbReference>
<dbReference type="NCBIfam" id="TIGR01474">
    <property type="entry name" value="ubiA_proteo"/>
    <property type="match status" value="1"/>
</dbReference>
<dbReference type="PANTHER" id="PTHR11048:SF28">
    <property type="entry name" value="4-HYDROXYBENZOATE POLYPRENYLTRANSFERASE, MITOCHONDRIAL"/>
    <property type="match status" value="1"/>
</dbReference>
<dbReference type="PANTHER" id="PTHR11048">
    <property type="entry name" value="PRENYLTRANSFERASES"/>
    <property type="match status" value="1"/>
</dbReference>
<dbReference type="Pfam" id="PF01040">
    <property type="entry name" value="UbiA"/>
    <property type="match status" value="1"/>
</dbReference>
<dbReference type="PROSITE" id="PS00943">
    <property type="entry name" value="UBIA"/>
    <property type="match status" value="1"/>
</dbReference>
<feature type="chain" id="PRO_1000186660" description="4-hydroxybenzoate octaprenyltransferase">
    <location>
        <begin position="1"/>
        <end position="287"/>
    </location>
</feature>
<feature type="transmembrane region" description="Helical" evidence="1">
    <location>
        <begin position="21"/>
        <end position="41"/>
    </location>
</feature>
<feature type="transmembrane region" description="Helical" evidence="1">
    <location>
        <begin position="44"/>
        <end position="64"/>
    </location>
</feature>
<feature type="transmembrane region" description="Helical" evidence="1">
    <location>
        <begin position="91"/>
        <end position="111"/>
    </location>
</feature>
<feature type="transmembrane region" description="Helical" evidence="1">
    <location>
        <begin position="112"/>
        <end position="132"/>
    </location>
</feature>
<feature type="transmembrane region" description="Helical" evidence="1">
    <location>
        <begin position="139"/>
        <end position="159"/>
    </location>
</feature>
<feature type="transmembrane region" description="Helical" evidence="1">
    <location>
        <begin position="160"/>
        <end position="180"/>
    </location>
</feature>
<feature type="transmembrane region" description="Helical" evidence="1">
    <location>
        <begin position="211"/>
        <end position="231"/>
    </location>
</feature>
<feature type="transmembrane region" description="Helical" evidence="1">
    <location>
        <begin position="235"/>
        <end position="255"/>
    </location>
</feature>
<feature type="transmembrane region" description="Helical" evidence="1">
    <location>
        <begin position="263"/>
        <end position="283"/>
    </location>
</feature>
<sequence>MINLRQQIPHYLRLMRFDKPVGIFLLLWPTLWAVWIAAKGAPSFKIAVIFIAGSVVMRAAGCIVNDFADRHLDKHVQRTQMRPLASGSVSVTEAMLLFAVLSLIAFTLVLLLNRLTVELAVIGILLALVYPFLKRFTHLPQLWLGIAFSWSIPMAFAATVGHVPAVAWLLFFAAVLWPIVYDTQYAMIDREDDVKVGIKSTAILFGRYDRLMIGLLQGSVLLTFGLLGWYLRFNYWFYLGLLVALGLMCYQQFLIRHRKPPDCFAAFRNNNWVGFFIFLGILLTYRN</sequence>
<accession>B6J612</accession>